<reference key="1">
    <citation type="journal article" date="2005" name="J. Bacteriol.">
        <title>Whole-genome sequence analysis of Pseudomonas syringae pv. phaseolicola 1448A reveals divergence among pathovars in genes involved in virulence and transposition.</title>
        <authorList>
            <person name="Joardar V."/>
            <person name="Lindeberg M."/>
            <person name="Jackson R.W."/>
            <person name="Selengut J."/>
            <person name="Dodson R."/>
            <person name="Brinkac L.M."/>
            <person name="Daugherty S.C."/>
            <person name="DeBoy R.T."/>
            <person name="Durkin A.S."/>
            <person name="Gwinn Giglio M."/>
            <person name="Madupu R."/>
            <person name="Nelson W.C."/>
            <person name="Rosovitz M.J."/>
            <person name="Sullivan S.A."/>
            <person name="Crabtree J."/>
            <person name="Creasy T."/>
            <person name="Davidsen T.M."/>
            <person name="Haft D.H."/>
            <person name="Zafar N."/>
            <person name="Zhou L."/>
            <person name="Halpin R."/>
            <person name="Holley T."/>
            <person name="Khouri H.M."/>
            <person name="Feldblyum T.V."/>
            <person name="White O."/>
            <person name="Fraser C.M."/>
            <person name="Chatterjee A.K."/>
            <person name="Cartinhour S."/>
            <person name="Schneider D."/>
            <person name="Mansfield J.W."/>
            <person name="Collmer A."/>
            <person name="Buell R."/>
        </authorList>
    </citation>
    <scope>NUCLEOTIDE SEQUENCE [LARGE SCALE GENOMIC DNA]</scope>
    <source>
        <strain>1448A / Race 6</strain>
    </source>
</reference>
<accession>Q48JI5</accession>
<comment type="function">
    <text evidence="1">Catalyzes the dephosphorylation of undecaprenyl diphosphate (UPP). Confers resistance to bacitracin.</text>
</comment>
<comment type="catalytic activity">
    <reaction evidence="1">
        <text>di-trans,octa-cis-undecaprenyl diphosphate + H2O = di-trans,octa-cis-undecaprenyl phosphate + phosphate + H(+)</text>
        <dbReference type="Rhea" id="RHEA:28094"/>
        <dbReference type="ChEBI" id="CHEBI:15377"/>
        <dbReference type="ChEBI" id="CHEBI:15378"/>
        <dbReference type="ChEBI" id="CHEBI:43474"/>
        <dbReference type="ChEBI" id="CHEBI:58405"/>
        <dbReference type="ChEBI" id="CHEBI:60392"/>
        <dbReference type="EC" id="3.6.1.27"/>
    </reaction>
</comment>
<comment type="subcellular location">
    <subcellularLocation>
        <location evidence="1">Cell inner membrane</location>
        <topology evidence="1">Multi-pass membrane protein</topology>
    </subcellularLocation>
</comment>
<comment type="miscellaneous">
    <text>Bacitracin is thought to be involved in the inhibition of peptidoglycan synthesis by sequestering undecaprenyl diphosphate, thereby reducing the pool of lipid carrier available.</text>
</comment>
<comment type="similarity">
    <text evidence="1">Belongs to the UppP family.</text>
</comment>
<gene>
    <name evidence="1" type="primary">uppP</name>
    <name type="ordered locus">PSPPH_2232</name>
</gene>
<organism>
    <name type="scientific">Pseudomonas savastanoi pv. phaseolicola (strain 1448A / Race 6)</name>
    <name type="common">Pseudomonas syringae pv. phaseolicola (strain 1448A / Race 6)</name>
    <dbReference type="NCBI Taxonomy" id="264730"/>
    <lineage>
        <taxon>Bacteria</taxon>
        <taxon>Pseudomonadati</taxon>
        <taxon>Pseudomonadota</taxon>
        <taxon>Gammaproteobacteria</taxon>
        <taxon>Pseudomonadales</taxon>
        <taxon>Pseudomonadaceae</taxon>
        <taxon>Pseudomonas</taxon>
    </lineage>
</organism>
<name>UPPP_PSE14</name>
<proteinExistence type="inferred from homology"/>
<sequence>MMDLWTAAQALILGVVEGLTEFLPISSTGHQIIVADLIDFGGERAMAFNIIIQLGAILAVVWEFRRKILDVVTGLPKQQQAQRFTLNLLIAFMPAVVLGVIFADTIHHYLFNAITVATALVVGGVIMLWAERREHTVRTETVDDMTWSDALKVGLVQCLAMIPGTSRSGSTIIGGLLFGLSRKAATEFSFFLAMPTMVGAAVYSGYKYRDMFRPDDFAVFAIGFITSFIFAMIAVRALLKFIATHSYAVFAWYRIAFGLLILATWQFGWIDWASAKA</sequence>
<dbReference type="EC" id="3.6.1.27" evidence="1"/>
<dbReference type="EMBL" id="CP000058">
    <property type="protein sequence ID" value="AAZ37568.1"/>
    <property type="molecule type" value="Genomic_DNA"/>
</dbReference>
<dbReference type="SMR" id="Q48JI5"/>
<dbReference type="KEGG" id="psp:PSPPH_2232"/>
<dbReference type="eggNOG" id="COG1968">
    <property type="taxonomic scope" value="Bacteria"/>
</dbReference>
<dbReference type="HOGENOM" id="CLU_060296_2_0_6"/>
<dbReference type="Proteomes" id="UP000000551">
    <property type="component" value="Chromosome"/>
</dbReference>
<dbReference type="GO" id="GO:0005886">
    <property type="term" value="C:plasma membrane"/>
    <property type="evidence" value="ECO:0007669"/>
    <property type="project" value="UniProtKB-SubCell"/>
</dbReference>
<dbReference type="GO" id="GO:0050380">
    <property type="term" value="F:undecaprenyl-diphosphatase activity"/>
    <property type="evidence" value="ECO:0007669"/>
    <property type="project" value="UniProtKB-UniRule"/>
</dbReference>
<dbReference type="GO" id="GO:0071555">
    <property type="term" value="P:cell wall organization"/>
    <property type="evidence" value="ECO:0007669"/>
    <property type="project" value="UniProtKB-KW"/>
</dbReference>
<dbReference type="GO" id="GO:0009252">
    <property type="term" value="P:peptidoglycan biosynthetic process"/>
    <property type="evidence" value="ECO:0007669"/>
    <property type="project" value="UniProtKB-KW"/>
</dbReference>
<dbReference type="GO" id="GO:0008360">
    <property type="term" value="P:regulation of cell shape"/>
    <property type="evidence" value="ECO:0007669"/>
    <property type="project" value="UniProtKB-KW"/>
</dbReference>
<dbReference type="GO" id="GO:0046677">
    <property type="term" value="P:response to antibiotic"/>
    <property type="evidence" value="ECO:0007669"/>
    <property type="project" value="UniProtKB-UniRule"/>
</dbReference>
<dbReference type="HAMAP" id="MF_01006">
    <property type="entry name" value="Undec_diphosphatase"/>
    <property type="match status" value="1"/>
</dbReference>
<dbReference type="InterPro" id="IPR003824">
    <property type="entry name" value="UppP"/>
</dbReference>
<dbReference type="NCBIfam" id="NF001389">
    <property type="entry name" value="PRK00281.1-2"/>
    <property type="match status" value="1"/>
</dbReference>
<dbReference type="NCBIfam" id="NF001390">
    <property type="entry name" value="PRK00281.1-4"/>
    <property type="match status" value="1"/>
</dbReference>
<dbReference type="NCBIfam" id="TIGR00753">
    <property type="entry name" value="undec_PP_bacA"/>
    <property type="match status" value="1"/>
</dbReference>
<dbReference type="PANTHER" id="PTHR30622">
    <property type="entry name" value="UNDECAPRENYL-DIPHOSPHATASE"/>
    <property type="match status" value="1"/>
</dbReference>
<dbReference type="PANTHER" id="PTHR30622:SF3">
    <property type="entry name" value="UNDECAPRENYL-DIPHOSPHATASE"/>
    <property type="match status" value="1"/>
</dbReference>
<dbReference type="Pfam" id="PF02673">
    <property type="entry name" value="BacA"/>
    <property type="match status" value="1"/>
</dbReference>
<keyword id="KW-0046">Antibiotic resistance</keyword>
<keyword id="KW-0997">Cell inner membrane</keyword>
<keyword id="KW-1003">Cell membrane</keyword>
<keyword id="KW-0133">Cell shape</keyword>
<keyword id="KW-0961">Cell wall biogenesis/degradation</keyword>
<keyword id="KW-0378">Hydrolase</keyword>
<keyword id="KW-0472">Membrane</keyword>
<keyword id="KW-0573">Peptidoglycan synthesis</keyword>
<keyword id="KW-0812">Transmembrane</keyword>
<keyword id="KW-1133">Transmembrane helix</keyword>
<evidence type="ECO:0000255" key="1">
    <source>
        <dbReference type="HAMAP-Rule" id="MF_01006"/>
    </source>
</evidence>
<protein>
    <recommendedName>
        <fullName evidence="1">Undecaprenyl-diphosphatase</fullName>
        <ecNumber evidence="1">3.6.1.27</ecNumber>
    </recommendedName>
    <alternativeName>
        <fullName evidence="1">Bacitracin resistance protein</fullName>
    </alternativeName>
    <alternativeName>
        <fullName evidence="1">Undecaprenyl pyrophosphate phosphatase</fullName>
    </alternativeName>
</protein>
<feature type="chain" id="PRO_0000227632" description="Undecaprenyl-diphosphatase">
    <location>
        <begin position="1"/>
        <end position="277"/>
    </location>
</feature>
<feature type="transmembrane region" description="Helical" evidence="1">
    <location>
        <begin position="5"/>
        <end position="25"/>
    </location>
</feature>
<feature type="transmembrane region" description="Helical" evidence="1">
    <location>
        <begin position="44"/>
        <end position="64"/>
    </location>
</feature>
<feature type="transmembrane region" description="Helical" evidence="1">
    <location>
        <begin position="86"/>
        <end position="106"/>
    </location>
</feature>
<feature type="transmembrane region" description="Helical" evidence="1">
    <location>
        <begin position="110"/>
        <end position="130"/>
    </location>
</feature>
<feature type="transmembrane region" description="Helical" evidence="1">
    <location>
        <begin position="184"/>
        <end position="204"/>
    </location>
</feature>
<feature type="transmembrane region" description="Helical" evidence="1">
    <location>
        <begin position="219"/>
        <end position="239"/>
    </location>
</feature>
<feature type="transmembrane region" description="Helical" evidence="1">
    <location>
        <begin position="255"/>
        <end position="275"/>
    </location>
</feature>